<proteinExistence type="inferred from homology"/>
<reference key="1">
    <citation type="journal article" date="2009" name="PLoS Genet.">
        <title>Organised genome dynamics in the Escherichia coli species results in highly diverse adaptive paths.</title>
        <authorList>
            <person name="Touchon M."/>
            <person name="Hoede C."/>
            <person name="Tenaillon O."/>
            <person name="Barbe V."/>
            <person name="Baeriswyl S."/>
            <person name="Bidet P."/>
            <person name="Bingen E."/>
            <person name="Bonacorsi S."/>
            <person name="Bouchier C."/>
            <person name="Bouvet O."/>
            <person name="Calteau A."/>
            <person name="Chiapello H."/>
            <person name="Clermont O."/>
            <person name="Cruveiller S."/>
            <person name="Danchin A."/>
            <person name="Diard M."/>
            <person name="Dossat C."/>
            <person name="Karoui M.E."/>
            <person name="Frapy E."/>
            <person name="Garry L."/>
            <person name="Ghigo J.M."/>
            <person name="Gilles A.M."/>
            <person name="Johnson J."/>
            <person name="Le Bouguenec C."/>
            <person name="Lescat M."/>
            <person name="Mangenot S."/>
            <person name="Martinez-Jehanne V."/>
            <person name="Matic I."/>
            <person name="Nassif X."/>
            <person name="Oztas S."/>
            <person name="Petit M.A."/>
            <person name="Pichon C."/>
            <person name="Rouy Z."/>
            <person name="Ruf C.S."/>
            <person name="Schneider D."/>
            <person name="Tourret J."/>
            <person name="Vacherie B."/>
            <person name="Vallenet D."/>
            <person name="Medigue C."/>
            <person name="Rocha E.P.C."/>
            <person name="Denamur E."/>
        </authorList>
    </citation>
    <scope>NUCLEOTIDE SEQUENCE [LARGE SCALE GENOMIC DNA]</scope>
    <source>
        <strain>IAI1</strain>
    </source>
</reference>
<sequence>MALLDFFLSRKKNTANIAKERLQIIVAERRRSDAEPHYLPQLRKDILEVICKYVQIDPEMVTVQLEQKDGDISILELNVTLPEAEELK</sequence>
<name>MINE_ECO8A</name>
<protein>
    <recommendedName>
        <fullName evidence="1">Cell division topological specificity factor</fullName>
    </recommendedName>
</protein>
<gene>
    <name evidence="1" type="primary">minE</name>
    <name type="ordered locus">ECIAI1_1190</name>
</gene>
<evidence type="ECO:0000255" key="1">
    <source>
        <dbReference type="HAMAP-Rule" id="MF_00262"/>
    </source>
</evidence>
<keyword id="KW-0131">Cell cycle</keyword>
<keyword id="KW-0132">Cell division</keyword>
<accession>B7LX87</accession>
<comment type="function">
    <text evidence="1">Prevents the cell division inhibition by proteins MinC and MinD at internal division sites while permitting inhibition at polar sites. This ensures cell division at the proper site by restricting the formation of a division septum at the midpoint of the long axis of the cell.</text>
</comment>
<comment type="similarity">
    <text evidence="1">Belongs to the MinE family.</text>
</comment>
<organism>
    <name type="scientific">Escherichia coli O8 (strain IAI1)</name>
    <dbReference type="NCBI Taxonomy" id="585034"/>
    <lineage>
        <taxon>Bacteria</taxon>
        <taxon>Pseudomonadati</taxon>
        <taxon>Pseudomonadota</taxon>
        <taxon>Gammaproteobacteria</taxon>
        <taxon>Enterobacterales</taxon>
        <taxon>Enterobacteriaceae</taxon>
        <taxon>Escherichia</taxon>
    </lineage>
</organism>
<feature type="chain" id="PRO_1000191283" description="Cell division topological specificity factor">
    <location>
        <begin position="1"/>
        <end position="88"/>
    </location>
</feature>
<dbReference type="EMBL" id="CU928160">
    <property type="protein sequence ID" value="CAQ98052.1"/>
    <property type="molecule type" value="Genomic_DNA"/>
</dbReference>
<dbReference type="RefSeq" id="WP_001185665.1">
    <property type="nucleotide sequence ID" value="NC_011741.1"/>
</dbReference>
<dbReference type="SMR" id="B7LX87"/>
<dbReference type="GeneID" id="93776260"/>
<dbReference type="KEGG" id="ecr:ECIAI1_1190"/>
<dbReference type="HOGENOM" id="CLU_137929_2_2_6"/>
<dbReference type="GO" id="GO:0051301">
    <property type="term" value="P:cell division"/>
    <property type="evidence" value="ECO:0007669"/>
    <property type="project" value="UniProtKB-KW"/>
</dbReference>
<dbReference type="GO" id="GO:0032955">
    <property type="term" value="P:regulation of division septum assembly"/>
    <property type="evidence" value="ECO:0007669"/>
    <property type="project" value="InterPro"/>
</dbReference>
<dbReference type="FunFam" id="3.30.1070.10:FF:000001">
    <property type="entry name" value="Cell division topological specificity factor"/>
    <property type="match status" value="1"/>
</dbReference>
<dbReference type="Gene3D" id="3.30.1070.10">
    <property type="entry name" value="Cell division topological specificity factor MinE"/>
    <property type="match status" value="1"/>
</dbReference>
<dbReference type="HAMAP" id="MF_00262">
    <property type="entry name" value="MinE"/>
    <property type="match status" value="1"/>
</dbReference>
<dbReference type="InterPro" id="IPR005527">
    <property type="entry name" value="MinE"/>
</dbReference>
<dbReference type="InterPro" id="IPR036707">
    <property type="entry name" value="MinE_sf"/>
</dbReference>
<dbReference type="NCBIfam" id="TIGR01215">
    <property type="entry name" value="minE"/>
    <property type="match status" value="1"/>
</dbReference>
<dbReference type="NCBIfam" id="NF001422">
    <property type="entry name" value="PRK00296.1"/>
    <property type="match status" value="1"/>
</dbReference>
<dbReference type="Pfam" id="PF03776">
    <property type="entry name" value="MinE"/>
    <property type="match status" value="1"/>
</dbReference>
<dbReference type="SUPFAM" id="SSF55229">
    <property type="entry name" value="Cell division protein MinE topological specificity domain"/>
    <property type="match status" value="1"/>
</dbReference>